<comment type="function">
    <text evidence="1">Catalyzes the transfer of endogenously produced octanoic acid from octanoyl-acyl-carrier-protein onto the lipoyl domains of lipoate-dependent enzymes. Lipoyl-ACP can also act as a substrate although octanoyl-ACP is likely to be the physiological substrate.</text>
</comment>
<comment type="catalytic activity">
    <reaction evidence="1">
        <text>octanoyl-[ACP] + L-lysyl-[protein] = N(6)-octanoyl-L-lysyl-[protein] + holo-[ACP] + H(+)</text>
        <dbReference type="Rhea" id="RHEA:17665"/>
        <dbReference type="Rhea" id="RHEA-COMP:9636"/>
        <dbReference type="Rhea" id="RHEA-COMP:9685"/>
        <dbReference type="Rhea" id="RHEA-COMP:9752"/>
        <dbReference type="Rhea" id="RHEA-COMP:9928"/>
        <dbReference type="ChEBI" id="CHEBI:15378"/>
        <dbReference type="ChEBI" id="CHEBI:29969"/>
        <dbReference type="ChEBI" id="CHEBI:64479"/>
        <dbReference type="ChEBI" id="CHEBI:78463"/>
        <dbReference type="ChEBI" id="CHEBI:78809"/>
        <dbReference type="EC" id="2.3.1.181"/>
    </reaction>
</comment>
<comment type="pathway">
    <text evidence="1">Protein modification; protein lipoylation via endogenous pathway; protein N(6)-(lipoyl)lysine from octanoyl-[acyl-carrier-protein]: step 1/2.</text>
</comment>
<comment type="subcellular location">
    <subcellularLocation>
        <location evidence="1">Cytoplasm</location>
    </subcellularLocation>
</comment>
<comment type="miscellaneous">
    <text evidence="1">In the reaction, the free carboxyl group of octanoic acid is attached via an amide linkage to the epsilon-amino group of a specific lysine residue of lipoyl domains of lipoate-dependent enzymes.</text>
</comment>
<comment type="similarity">
    <text evidence="1">Belongs to the LipB family.</text>
</comment>
<comment type="sequence caution" evidence="3">
    <conflict type="erroneous initiation">
        <sequence resource="EMBL-CDS" id="ABM07415"/>
    </conflict>
    <text>Extended N-terminus.</text>
</comment>
<gene>
    <name evidence="1" type="primary">lipB</name>
    <name type="ordered locus">AAur_1748</name>
</gene>
<organism>
    <name type="scientific">Paenarthrobacter aurescens (strain TC1)</name>
    <dbReference type="NCBI Taxonomy" id="290340"/>
    <lineage>
        <taxon>Bacteria</taxon>
        <taxon>Bacillati</taxon>
        <taxon>Actinomycetota</taxon>
        <taxon>Actinomycetes</taxon>
        <taxon>Micrococcales</taxon>
        <taxon>Micrococcaceae</taxon>
        <taxon>Paenarthrobacter</taxon>
    </lineage>
</organism>
<keyword id="KW-0012">Acyltransferase</keyword>
<keyword id="KW-0963">Cytoplasm</keyword>
<keyword id="KW-0808">Transferase</keyword>
<name>LIPB_PAEAT</name>
<evidence type="ECO:0000255" key="1">
    <source>
        <dbReference type="HAMAP-Rule" id="MF_00013"/>
    </source>
</evidence>
<evidence type="ECO:0000255" key="2">
    <source>
        <dbReference type="PROSITE-ProRule" id="PRU01067"/>
    </source>
</evidence>
<evidence type="ECO:0000305" key="3"/>
<proteinExistence type="inferred from homology"/>
<protein>
    <recommendedName>
        <fullName evidence="1">Octanoyltransferase</fullName>
        <ecNumber evidence="1">2.3.1.181</ecNumber>
    </recommendedName>
    <alternativeName>
        <fullName evidence="1">Lipoate-protein ligase B</fullName>
    </alternativeName>
    <alternativeName>
        <fullName evidence="1">Lipoyl/octanoyl transferase</fullName>
    </alternativeName>
    <alternativeName>
        <fullName evidence="1">Octanoyl-[acyl-carrier-protein]-protein N-octanoyltransferase</fullName>
    </alternativeName>
</protein>
<sequence length="222" mass="24196">MTLEFSQLGLAPDFVDYMQGWDLQRDIHNKVVAGEKNSTVLILEHAAVYTAGKLTEDHERPFDGTPVVPVDRGGKLTWHGPGQLIAYPILKLKNRAGIRDYVERLEAIMIAVMQDYGIKAVTVKGRAGVWILADDKGPDRKIAAIGIRVLDGVTMHGVAINCSNDLAPYAQIIACGITDASVTTMSLETGRTINPADIVDRFVEEFSKHDEALVSTPEGALQ</sequence>
<reference key="1">
    <citation type="journal article" date="2006" name="PLoS Genet.">
        <title>Secrets of soil survival revealed by the genome sequence of Arthrobacter aurescens TC1.</title>
        <authorList>
            <person name="Mongodin E.F."/>
            <person name="Shapir N."/>
            <person name="Daugherty S.C."/>
            <person name="DeBoy R.T."/>
            <person name="Emerson J.B."/>
            <person name="Shvartzbeyn A."/>
            <person name="Radune D."/>
            <person name="Vamathevan J."/>
            <person name="Riggs F."/>
            <person name="Grinberg V."/>
            <person name="Khouri H.M."/>
            <person name="Wackett L.P."/>
            <person name="Nelson K.E."/>
            <person name="Sadowsky M.J."/>
        </authorList>
    </citation>
    <scope>NUCLEOTIDE SEQUENCE [LARGE SCALE GENOMIC DNA]</scope>
    <source>
        <strain>TC1</strain>
    </source>
</reference>
<feature type="chain" id="PRO_0000321623" description="Octanoyltransferase">
    <location>
        <begin position="1"/>
        <end position="222"/>
    </location>
</feature>
<feature type="domain" description="BPL/LPL catalytic" evidence="2">
    <location>
        <begin position="34"/>
        <end position="214"/>
    </location>
</feature>
<feature type="active site" description="Acyl-thioester intermediate" evidence="1">
    <location>
        <position position="175"/>
    </location>
</feature>
<feature type="binding site" evidence="1">
    <location>
        <begin position="72"/>
        <end position="79"/>
    </location>
    <ligand>
        <name>substrate</name>
    </ligand>
</feature>
<feature type="binding site" evidence="1">
    <location>
        <begin position="144"/>
        <end position="146"/>
    </location>
    <ligand>
        <name>substrate</name>
    </ligand>
</feature>
<feature type="binding site" evidence="1">
    <location>
        <begin position="157"/>
        <end position="159"/>
    </location>
    <ligand>
        <name>substrate</name>
    </ligand>
</feature>
<feature type="site" description="Lowers pKa of active site Cys" evidence="1">
    <location>
        <position position="141"/>
    </location>
</feature>
<dbReference type="EC" id="2.3.1.181" evidence="1"/>
<dbReference type="EMBL" id="CP000474">
    <property type="protein sequence ID" value="ABM07415.1"/>
    <property type="status" value="ALT_INIT"/>
    <property type="molecule type" value="Genomic_DNA"/>
</dbReference>
<dbReference type="RefSeq" id="WP_043805999.1">
    <property type="nucleotide sequence ID" value="NC_008711.1"/>
</dbReference>
<dbReference type="SMR" id="A1R5J6"/>
<dbReference type="STRING" id="290340.AAur_1748"/>
<dbReference type="KEGG" id="aau:AAur_1748"/>
<dbReference type="eggNOG" id="COG0321">
    <property type="taxonomic scope" value="Bacteria"/>
</dbReference>
<dbReference type="HOGENOM" id="CLU_035168_2_0_11"/>
<dbReference type="OrthoDB" id="9787061at2"/>
<dbReference type="UniPathway" id="UPA00538">
    <property type="reaction ID" value="UER00592"/>
</dbReference>
<dbReference type="Proteomes" id="UP000000637">
    <property type="component" value="Chromosome"/>
</dbReference>
<dbReference type="GO" id="GO:0005737">
    <property type="term" value="C:cytoplasm"/>
    <property type="evidence" value="ECO:0007669"/>
    <property type="project" value="UniProtKB-SubCell"/>
</dbReference>
<dbReference type="GO" id="GO:0033819">
    <property type="term" value="F:lipoyl(octanoyl) transferase activity"/>
    <property type="evidence" value="ECO:0007669"/>
    <property type="project" value="UniProtKB-EC"/>
</dbReference>
<dbReference type="GO" id="GO:0036211">
    <property type="term" value="P:protein modification process"/>
    <property type="evidence" value="ECO:0007669"/>
    <property type="project" value="InterPro"/>
</dbReference>
<dbReference type="CDD" id="cd16444">
    <property type="entry name" value="LipB"/>
    <property type="match status" value="1"/>
</dbReference>
<dbReference type="Gene3D" id="3.30.930.10">
    <property type="entry name" value="Bira Bifunctional Protein, Domain 2"/>
    <property type="match status" value="1"/>
</dbReference>
<dbReference type="HAMAP" id="MF_00013">
    <property type="entry name" value="LipB"/>
    <property type="match status" value="1"/>
</dbReference>
<dbReference type="InterPro" id="IPR045864">
    <property type="entry name" value="aa-tRNA-synth_II/BPL/LPL"/>
</dbReference>
<dbReference type="InterPro" id="IPR004143">
    <property type="entry name" value="BPL_LPL_catalytic"/>
</dbReference>
<dbReference type="InterPro" id="IPR000544">
    <property type="entry name" value="Octanoyltransferase"/>
</dbReference>
<dbReference type="InterPro" id="IPR020605">
    <property type="entry name" value="Octanoyltransferase_CS"/>
</dbReference>
<dbReference type="NCBIfam" id="TIGR00214">
    <property type="entry name" value="lipB"/>
    <property type="match status" value="1"/>
</dbReference>
<dbReference type="NCBIfam" id="NF010925">
    <property type="entry name" value="PRK14345.1"/>
    <property type="match status" value="1"/>
</dbReference>
<dbReference type="PANTHER" id="PTHR10993:SF7">
    <property type="entry name" value="LIPOYLTRANSFERASE 2, MITOCHONDRIAL-RELATED"/>
    <property type="match status" value="1"/>
</dbReference>
<dbReference type="PANTHER" id="PTHR10993">
    <property type="entry name" value="OCTANOYLTRANSFERASE"/>
    <property type="match status" value="1"/>
</dbReference>
<dbReference type="Pfam" id="PF21948">
    <property type="entry name" value="LplA-B_cat"/>
    <property type="match status" value="1"/>
</dbReference>
<dbReference type="PIRSF" id="PIRSF016262">
    <property type="entry name" value="LPLase"/>
    <property type="match status" value="1"/>
</dbReference>
<dbReference type="SUPFAM" id="SSF55681">
    <property type="entry name" value="Class II aaRS and biotin synthetases"/>
    <property type="match status" value="1"/>
</dbReference>
<dbReference type="PROSITE" id="PS51733">
    <property type="entry name" value="BPL_LPL_CATALYTIC"/>
    <property type="match status" value="1"/>
</dbReference>
<dbReference type="PROSITE" id="PS01313">
    <property type="entry name" value="LIPB"/>
    <property type="match status" value="1"/>
</dbReference>
<accession>A1R5J6</accession>